<gene>
    <name type="primary">EOL2</name>
    <name type="ordered locus">At5g58550</name>
    <name type="ORF">MQJ2</name>
    <name type="ORF">MZN1.1</name>
</gene>
<protein>
    <recommendedName>
        <fullName>ETO1-like protein 2</fullName>
    </recommendedName>
    <alternativeName>
        <fullName>Ethylene overproducer 1-like protein 2</fullName>
    </alternativeName>
</protein>
<dbReference type="EMBL" id="AY572793">
    <property type="protein sequence ID" value="AAT01658.1"/>
    <property type="molecule type" value="mRNA"/>
</dbReference>
<dbReference type="EMBL" id="AB020755">
    <property type="protein sequence ID" value="BAA97325.1"/>
    <property type="status" value="ALT_INIT"/>
    <property type="molecule type" value="Genomic_DNA"/>
</dbReference>
<dbReference type="EMBL" id="AB025632">
    <property type="status" value="NOT_ANNOTATED_CDS"/>
    <property type="molecule type" value="Genomic_DNA"/>
</dbReference>
<dbReference type="EMBL" id="CP002688">
    <property type="protein sequence ID" value="AED97067.1"/>
    <property type="molecule type" value="Genomic_DNA"/>
</dbReference>
<dbReference type="EMBL" id="AK228743">
    <property type="protein sequence ID" value="BAF00643.1"/>
    <property type="molecule type" value="mRNA"/>
</dbReference>
<dbReference type="RefSeq" id="NP_200663.2">
    <property type="nucleotide sequence ID" value="NM_125241.5"/>
</dbReference>
<dbReference type="SMR" id="Q9LV01"/>
<dbReference type="BioGRID" id="21212">
    <property type="interactions" value="4"/>
</dbReference>
<dbReference type="FunCoup" id="Q9LV01">
    <property type="interactions" value="4"/>
</dbReference>
<dbReference type="IntAct" id="Q9LV01">
    <property type="interactions" value="2"/>
</dbReference>
<dbReference type="STRING" id="3702.Q9LV01"/>
<dbReference type="PaxDb" id="3702-AT5G58550.1"/>
<dbReference type="PeptideAtlas" id="Q9LV01"/>
<dbReference type="ProteomicsDB" id="222328">
    <molecule id="Q9LV01-1"/>
</dbReference>
<dbReference type="GeneID" id="835968"/>
<dbReference type="KEGG" id="ath:AT5G58550"/>
<dbReference type="Araport" id="AT5G58550"/>
<dbReference type="TAIR" id="AT5G58550"/>
<dbReference type="eggNOG" id="ENOG502QRY8">
    <property type="taxonomic scope" value="Eukaryota"/>
</dbReference>
<dbReference type="InParanoid" id="Q9LV01"/>
<dbReference type="PhylomeDB" id="Q9LV01"/>
<dbReference type="UniPathway" id="UPA00143"/>
<dbReference type="PRO" id="PR:Q9LV01"/>
<dbReference type="Proteomes" id="UP000006548">
    <property type="component" value="Chromosome 5"/>
</dbReference>
<dbReference type="ExpressionAtlas" id="Q9LV01">
    <property type="expression patterns" value="baseline and differential"/>
</dbReference>
<dbReference type="GO" id="GO:0009873">
    <property type="term" value="P:ethylene-activated signaling pathway"/>
    <property type="evidence" value="ECO:0007669"/>
    <property type="project" value="UniProtKB-KW"/>
</dbReference>
<dbReference type="GO" id="GO:0010105">
    <property type="term" value="P:negative regulation of ethylene-activated signaling pathway"/>
    <property type="evidence" value="ECO:0007669"/>
    <property type="project" value="InterPro"/>
</dbReference>
<dbReference type="GO" id="GO:0016567">
    <property type="term" value="P:protein ubiquitination"/>
    <property type="evidence" value="ECO:0007669"/>
    <property type="project" value="UniProtKB-UniPathway"/>
</dbReference>
<dbReference type="CDD" id="cd18190">
    <property type="entry name" value="BTB_POZ_ETO1-like"/>
    <property type="match status" value="1"/>
</dbReference>
<dbReference type="Gene3D" id="3.30.710.10">
    <property type="entry name" value="Potassium Channel Kv1.1, Chain A"/>
    <property type="match status" value="1"/>
</dbReference>
<dbReference type="Gene3D" id="1.25.40.10">
    <property type="entry name" value="Tetratricopeptide repeat domain"/>
    <property type="match status" value="3"/>
</dbReference>
<dbReference type="InterPro" id="IPR000210">
    <property type="entry name" value="BTB/POZ_dom"/>
</dbReference>
<dbReference type="InterPro" id="IPR044631">
    <property type="entry name" value="ETO1-like"/>
</dbReference>
<dbReference type="InterPro" id="IPR011333">
    <property type="entry name" value="SKP1/BTB/POZ_sf"/>
</dbReference>
<dbReference type="InterPro" id="IPR011990">
    <property type="entry name" value="TPR-like_helical_dom_sf"/>
</dbReference>
<dbReference type="InterPro" id="IPR019734">
    <property type="entry name" value="TPR_rpt"/>
</dbReference>
<dbReference type="PANTHER" id="PTHR44203:SF3">
    <property type="entry name" value="ETO1-LIKE PROTEIN 2"/>
    <property type="match status" value="1"/>
</dbReference>
<dbReference type="PANTHER" id="PTHR44203">
    <property type="entry name" value="ETO1-RELATED"/>
    <property type="match status" value="1"/>
</dbReference>
<dbReference type="Pfam" id="PF00651">
    <property type="entry name" value="BTB"/>
    <property type="match status" value="1"/>
</dbReference>
<dbReference type="Pfam" id="PF00515">
    <property type="entry name" value="TPR_1"/>
    <property type="match status" value="1"/>
</dbReference>
<dbReference type="SMART" id="SM00225">
    <property type="entry name" value="BTB"/>
    <property type="match status" value="1"/>
</dbReference>
<dbReference type="SMART" id="SM00028">
    <property type="entry name" value="TPR"/>
    <property type="match status" value="5"/>
</dbReference>
<dbReference type="SUPFAM" id="SSF54695">
    <property type="entry name" value="POZ domain"/>
    <property type="match status" value="1"/>
</dbReference>
<dbReference type="SUPFAM" id="SSF48452">
    <property type="entry name" value="TPR-like"/>
    <property type="match status" value="3"/>
</dbReference>
<dbReference type="PROSITE" id="PS50005">
    <property type="entry name" value="TPR"/>
    <property type="match status" value="3"/>
</dbReference>
<dbReference type="PROSITE" id="PS50293">
    <property type="entry name" value="TPR_REGION"/>
    <property type="match status" value="4"/>
</dbReference>
<reference key="1">
    <citation type="journal article" date="2004" name="Nature">
        <title>Regulation of ethylene gas biosynthesis by the Arabidopsis ETO1 protein.</title>
        <authorList>
            <person name="Wang K.L.-C."/>
            <person name="Yoshida H."/>
            <person name="Lurin C."/>
            <person name="Ecker J.R."/>
        </authorList>
    </citation>
    <scope>NUCLEOTIDE SEQUENCE [MRNA]</scope>
    <scope>INTERACTION WITH ACS5</scope>
</reference>
<reference key="2">
    <citation type="journal article" date="2000" name="DNA Res.">
        <title>Structural analysis of Arabidopsis thaliana chromosome 5. X. Sequence features of the regions of 3,076,755 bp covered by sixty P1 and TAC clones.</title>
        <authorList>
            <person name="Sato S."/>
            <person name="Nakamura Y."/>
            <person name="Kaneko T."/>
            <person name="Katoh T."/>
            <person name="Asamizu E."/>
            <person name="Kotani H."/>
            <person name="Tabata S."/>
        </authorList>
    </citation>
    <scope>NUCLEOTIDE SEQUENCE [LARGE SCALE GENOMIC DNA]</scope>
    <source>
        <strain>cv. Columbia</strain>
    </source>
</reference>
<reference key="3">
    <citation type="submission" date="1999-04" db="EMBL/GenBank/DDBJ databases">
        <title>Structural analysis of Arabidopsis thaliana chromosome 5. XI.</title>
        <authorList>
            <person name="Kaneko T."/>
            <person name="Katoh T."/>
            <person name="Asamizu E."/>
            <person name="Sato S."/>
            <person name="Nakamura Y."/>
            <person name="Kotani H."/>
            <person name="Tabata S."/>
        </authorList>
    </citation>
    <scope>NUCLEOTIDE SEQUENCE [LARGE SCALE GENOMIC DNA]</scope>
    <source>
        <strain>cv. Columbia</strain>
    </source>
</reference>
<reference key="4">
    <citation type="journal article" date="2017" name="Plant J.">
        <title>Araport11: a complete reannotation of the Arabidopsis thaliana reference genome.</title>
        <authorList>
            <person name="Cheng C.Y."/>
            <person name="Krishnakumar V."/>
            <person name="Chan A.P."/>
            <person name="Thibaud-Nissen F."/>
            <person name="Schobel S."/>
            <person name="Town C.D."/>
        </authorList>
    </citation>
    <scope>GENOME REANNOTATION</scope>
    <scope>SEQUENCE REVISION</scope>
    <source>
        <strain>cv. Columbia</strain>
    </source>
</reference>
<reference key="5">
    <citation type="submission" date="2006-07" db="EMBL/GenBank/DDBJ databases">
        <title>Large-scale analysis of RIKEN Arabidopsis full-length (RAFL) cDNAs.</title>
        <authorList>
            <person name="Totoki Y."/>
            <person name="Seki M."/>
            <person name="Ishida J."/>
            <person name="Nakajima M."/>
            <person name="Enju A."/>
            <person name="Kamiya A."/>
            <person name="Narusaka M."/>
            <person name="Shin-i T."/>
            <person name="Nakagawa M."/>
            <person name="Sakamoto N."/>
            <person name="Oishi K."/>
            <person name="Kohara Y."/>
            <person name="Kobayashi M."/>
            <person name="Toyoda A."/>
            <person name="Sakaki Y."/>
            <person name="Sakurai T."/>
            <person name="Iida K."/>
            <person name="Akiyama K."/>
            <person name="Satou M."/>
            <person name="Toyoda T."/>
            <person name="Konagaya A."/>
            <person name="Carninci P."/>
            <person name="Kawai J."/>
            <person name="Hayashizaki Y."/>
            <person name="Shinozaki K."/>
        </authorList>
    </citation>
    <scope>NUCLEOTIDE SEQUENCE [LARGE SCALE MRNA] OF 61-925</scope>
    <source>
        <strain>cv. Columbia</strain>
    </source>
</reference>
<reference key="6">
    <citation type="journal article" date="2005" name="J. Biol. Chem.">
        <title>Cullins 3a and 3b assemble with members of the broad complex/tramtrack/bric-a-brac (BTB) protein family to form essential ubiquitin-protein ligases (E3s) in Arabidopsis.</title>
        <authorList>
            <person name="Gingerich D.J."/>
            <person name="Gagne J.M."/>
            <person name="Salter D.W."/>
            <person name="Hellmann H."/>
            <person name="Estelle M."/>
            <person name="Ma L."/>
            <person name="Vierstra R.D."/>
        </authorList>
    </citation>
    <scope>DOMAIN BTB</scope>
</reference>
<reference key="7">
    <citation type="journal article" date="2009" name="Plant J.">
        <title>The BTB ubiquitin ligases ETO1, EOL1 and EOL2 act collectively to regulate ethylene biosynthesis in Arabidopsis by controlling type-2 ACC synthase levels.</title>
        <authorList>
            <person name="Christians M.J."/>
            <person name="Gingerich D.J."/>
            <person name="Hansen M."/>
            <person name="Binder B.M."/>
            <person name="Kieber J.J."/>
            <person name="Vierstra R.D."/>
        </authorList>
    </citation>
    <scope>FUNCTION</scope>
    <scope>TISSUE SPECIFICITY</scope>
</reference>
<keyword id="KW-0025">Alternative splicing</keyword>
<keyword id="KW-0175">Coiled coil</keyword>
<keyword id="KW-0936">Ethylene signaling pathway</keyword>
<keyword id="KW-1185">Reference proteome</keyword>
<keyword id="KW-0677">Repeat</keyword>
<keyword id="KW-0802">TPR repeat</keyword>
<keyword id="KW-0833">Ubl conjugation pathway</keyword>
<name>ETOL2_ARATH</name>
<sequence>MRNLKLFERFKSTQVHAFTTQDSPSTSSNGSPRMMKFLGHPKSKSRSLLPHGFPTTDLLEPPLDSYLKPIDLVESLSNLYRRIESSSESEASMLYLEQYAVLRSLGDAKLLRRCLLNARRHAIDVPCKVVFSAWLRFFRREHELVGVESMDCNGLASECPKTSLTHGCDLNVDDEGCECSTVCEDEFGSDDVKISKADEFSGLDEVSDISFCVGSEKAKCVRSRIAALSRPFEAMLYGSFVESTTSEIDFSENGISIEAMLALNIYSRIKRVDLFRVETVFELLQLASKFCCDDLKSECEARLAASVTDLDKALTFVEYALEERTTLLLSACLQVFLRELPQSLHNPKVMRFFCSSEAKEQLAFLGSECVFLLYYFLSQVGMEEKLTTDTMLILLERTREFARTNWQKALSLHQMGCVLFERKDYKAAQFHFRLASSLGHVYSLAGVSRTEYKQGKRYSAYRLMNFLISNHKPHGWMYQERSLYNVGVEKLKDLATATELDPTLSFPYKYRAVMKFEQKQIKEAFQEIDRLIQFKLSPECLELRAWLYLATGDRESCLRDLRAVLSLEPNYVVFGGKMRDDLVEALTAQCIEVESEADCWVRLFDRWSAVDDVASLAVVHQMLQNDPSKNFLRFRQSLLLLRLNCQGAAMRCLRMAWNLATSEAERLVYEGWLLYDMGYVEETLTKAEEAISIQRSFEAFFLKAYALADKNLDADEISCVVQVLEEALKCPSDGLRKGQALNNLGSIYINLGMLDQAETAYKNAIEIKHIRARQGLARVYFLKNQRKEACEEMTKLIEKSCSKAAAYEKRSEYCEREKAKEDLDMATTLDPLRTYPYRYRAAVLMDDQRETEAVEELSKAIAFRPELQTLHLRAAFHEATGNLSLATQDCEAALCLDPNHTETLHLYSRSKDQASSIDNTIFGLD</sequence>
<organism>
    <name type="scientific">Arabidopsis thaliana</name>
    <name type="common">Mouse-ear cress</name>
    <dbReference type="NCBI Taxonomy" id="3702"/>
    <lineage>
        <taxon>Eukaryota</taxon>
        <taxon>Viridiplantae</taxon>
        <taxon>Streptophyta</taxon>
        <taxon>Embryophyta</taxon>
        <taxon>Tracheophyta</taxon>
        <taxon>Spermatophyta</taxon>
        <taxon>Magnoliopsida</taxon>
        <taxon>eudicotyledons</taxon>
        <taxon>Gunneridae</taxon>
        <taxon>Pentapetalae</taxon>
        <taxon>rosids</taxon>
        <taxon>malvids</taxon>
        <taxon>Brassicales</taxon>
        <taxon>Brassicaceae</taxon>
        <taxon>Camelineae</taxon>
        <taxon>Arabidopsis</taxon>
    </lineage>
</organism>
<accession>Q9LV01</accession>
<accession>F4KF02</accession>
<accession>Q0WQF6</accession>
<accession>Q6PWY1</accession>
<proteinExistence type="evidence at protein level"/>
<evidence type="ECO:0000250" key="1"/>
<evidence type="ECO:0000255" key="2"/>
<evidence type="ECO:0000269" key="3">
    <source>
    </source>
</evidence>
<evidence type="ECO:0000269" key="4">
    <source>
    </source>
</evidence>
<evidence type="ECO:0000269" key="5">
    <source>
    </source>
</evidence>
<evidence type="ECO:0000305" key="6"/>
<feature type="chain" id="PRO_0000106291" description="ETO1-like protein 2">
    <location>
        <begin position="1"/>
        <end position="925"/>
    </location>
</feature>
<feature type="domain" description="BTB">
    <location>
        <begin position="207"/>
        <end position="307"/>
    </location>
</feature>
<feature type="repeat" description="TPR 1">
    <location>
        <begin position="409"/>
        <end position="442"/>
    </location>
</feature>
<feature type="repeat" description="TPR 2">
    <location>
        <begin position="538"/>
        <end position="571"/>
    </location>
</feature>
<feature type="repeat" description="TPR 3">
    <location>
        <begin position="664"/>
        <end position="697"/>
    </location>
</feature>
<feature type="repeat" description="TPR 4">
    <location>
        <begin position="738"/>
        <end position="771"/>
    </location>
</feature>
<feature type="repeat" description="TPR 5">
    <location>
        <begin position="773"/>
        <end position="803"/>
    </location>
</feature>
<feature type="repeat" description="TPR 6">
    <location>
        <begin position="834"/>
        <end position="867"/>
    </location>
</feature>
<feature type="repeat" description="TPR 7">
    <location>
        <begin position="869"/>
        <end position="900"/>
    </location>
</feature>
<feature type="coiled-coil region" evidence="2">
    <location>
        <begin position="509"/>
        <end position="533"/>
    </location>
</feature>
<feature type="sequence conflict" description="In Ref. 5; BAF00643." evidence="6" ref="5">
    <original>M</original>
    <variation>L</variation>
    <location>
        <position position="477"/>
    </location>
</feature>
<feature type="sequence conflict" description="In Ref. 4; AED97067 and 5; BAF00643." evidence="6" ref="4 5">
    <original>I</original>
    <variation>T</variation>
    <location>
        <position position="770"/>
    </location>
</feature>
<comment type="function">
    <text evidence="1 5">Potential regulator of the ethylene pathway, which acts by regulating the stability of 1-aminocyclopropane-1-carboxylate synthase (ACS) enzymes. May act as a substrate-specific adapter that connects ACS enzymes, such as ACS5, to ubiquitin ligase complexes, leading to proteasomal degradation of ACS enzymes (By similarity).</text>
</comment>
<comment type="pathway">
    <text>Protein modification; protein ubiquitination.</text>
</comment>
<comment type="subunit">
    <text evidence="3">Interacts with the C-terminal domain of ACS5.</text>
</comment>
<comment type="alternative products">
    <event type="alternative splicing"/>
    <isoform>
        <id>Q9LV01-1</id>
        <name>1</name>
        <sequence type="displayed"/>
    </isoform>
    <text>A number of isoforms are produced. According to EST sequences.</text>
</comment>
<comment type="tissue specificity">
    <text evidence="5">Constitutively expressed in green and etiolated seedlings.</text>
</comment>
<comment type="domain">
    <text evidence="4">The BTB/POZ-like domain may mediate the interaction with some component of ubiquitin ligase complexes.</text>
</comment>
<comment type="similarity">
    <text evidence="6">Belongs to the ETO1 family.</text>
</comment>
<comment type="sequence caution" evidence="6">
    <conflict type="erroneous initiation">
        <sequence resource="EMBL-CDS" id="BAA97325"/>
    </conflict>
    <text>Truncated N-terminus.</text>
</comment>